<comment type="function">
    <text evidence="1">Acts as an anti-CsrA protein, binds CsrA and prevents it from repressing translation of its target genes, one of which is flagellin. Binds to flagellin and participates in the assembly of the flagellum.</text>
</comment>
<comment type="subunit">
    <text evidence="1">Interacts with translational regulator CsrA and flagellin(s).</text>
</comment>
<comment type="subcellular location">
    <subcellularLocation>
        <location evidence="1">Cytoplasm</location>
    </subcellularLocation>
</comment>
<comment type="similarity">
    <text evidence="1">Belongs to the FliW family.</text>
</comment>
<organism>
    <name type="scientific">Heliobacterium modesticaldum (strain ATCC 51547 / Ice1)</name>
    <dbReference type="NCBI Taxonomy" id="498761"/>
    <lineage>
        <taxon>Bacteria</taxon>
        <taxon>Bacillati</taxon>
        <taxon>Bacillota</taxon>
        <taxon>Clostridia</taxon>
        <taxon>Eubacteriales</taxon>
        <taxon>Heliobacteriaceae</taxon>
        <taxon>Heliomicrobium</taxon>
    </lineage>
</organism>
<reference key="1">
    <citation type="journal article" date="2008" name="J. Bacteriol.">
        <title>The genome of Heliobacterium modesticaldum, a phototrophic representative of the Firmicutes containing the simplest photosynthetic apparatus.</title>
        <authorList>
            <person name="Sattley W.M."/>
            <person name="Madigan M.T."/>
            <person name="Swingley W.D."/>
            <person name="Cheung P.C."/>
            <person name="Clocksin K.M."/>
            <person name="Conrad A.L."/>
            <person name="Dejesa L.C."/>
            <person name="Honchak B.M."/>
            <person name="Jung D.O."/>
            <person name="Karbach L.E."/>
            <person name="Kurdoglu A."/>
            <person name="Lahiri S."/>
            <person name="Mastrian S.D."/>
            <person name="Page L.E."/>
            <person name="Taylor H.L."/>
            <person name="Wang Z.T."/>
            <person name="Raymond J."/>
            <person name="Chen M."/>
            <person name="Blankenship R.E."/>
            <person name="Touchman J.W."/>
        </authorList>
    </citation>
    <scope>NUCLEOTIDE SEQUENCE [LARGE SCALE GENOMIC DNA]</scope>
    <source>
        <strain>ATCC 51547 / Ice1</strain>
    </source>
</reference>
<dbReference type="EMBL" id="CP000930">
    <property type="protein sequence ID" value="ABZ83366.1"/>
    <property type="molecule type" value="Genomic_DNA"/>
</dbReference>
<dbReference type="RefSeq" id="WP_012281898.1">
    <property type="nucleotide sequence ID" value="NC_010337.2"/>
</dbReference>
<dbReference type="SMR" id="B0TH41"/>
<dbReference type="STRING" id="498761.HM1_1208"/>
<dbReference type="KEGG" id="hmo:HM1_1208"/>
<dbReference type="eggNOG" id="COG1699">
    <property type="taxonomic scope" value="Bacteria"/>
</dbReference>
<dbReference type="HOGENOM" id="CLU_112356_0_2_9"/>
<dbReference type="OrthoDB" id="9801235at2"/>
<dbReference type="Proteomes" id="UP000008550">
    <property type="component" value="Chromosome"/>
</dbReference>
<dbReference type="GO" id="GO:0005737">
    <property type="term" value="C:cytoplasm"/>
    <property type="evidence" value="ECO:0007669"/>
    <property type="project" value="UniProtKB-SubCell"/>
</dbReference>
<dbReference type="GO" id="GO:0044780">
    <property type="term" value="P:bacterial-type flagellum assembly"/>
    <property type="evidence" value="ECO:0007669"/>
    <property type="project" value="UniProtKB-UniRule"/>
</dbReference>
<dbReference type="GO" id="GO:0006417">
    <property type="term" value="P:regulation of translation"/>
    <property type="evidence" value="ECO:0007669"/>
    <property type="project" value="UniProtKB-KW"/>
</dbReference>
<dbReference type="Gene3D" id="2.30.290.10">
    <property type="entry name" value="BH3618-like"/>
    <property type="match status" value="1"/>
</dbReference>
<dbReference type="HAMAP" id="MF_01185">
    <property type="entry name" value="FliW"/>
    <property type="match status" value="1"/>
</dbReference>
<dbReference type="InterPro" id="IPR003775">
    <property type="entry name" value="Flagellar_assembly_factor_FliW"/>
</dbReference>
<dbReference type="InterPro" id="IPR024046">
    <property type="entry name" value="Flagellar_assmbl_FliW_dom_sf"/>
</dbReference>
<dbReference type="PANTHER" id="PTHR39190">
    <property type="entry name" value="FLAGELLAR ASSEMBLY FACTOR FLIW"/>
    <property type="match status" value="1"/>
</dbReference>
<dbReference type="PANTHER" id="PTHR39190:SF1">
    <property type="entry name" value="FLAGELLAR ASSEMBLY FACTOR FLIW"/>
    <property type="match status" value="1"/>
</dbReference>
<dbReference type="Pfam" id="PF02623">
    <property type="entry name" value="FliW"/>
    <property type="match status" value="1"/>
</dbReference>
<dbReference type="SUPFAM" id="SSF141457">
    <property type="entry name" value="BH3618-like"/>
    <property type="match status" value="1"/>
</dbReference>
<proteinExistence type="inferred from homology"/>
<accession>B0TH41</accession>
<sequence>MRIQTERFGVLDVPDEAVIRFPQGIPGFPQEKAFVLLPCAEADAFAFLQSIMTPPLAFLLVTPFAFFPDYNAPIHIEQVRHIGIDENNLGEIWTIVTVPDNYHDMTTNLLAPLVINRKKGEAAQVVLEKTNYTTKHRLYPASASTEANGKGGG</sequence>
<feature type="chain" id="PRO_1000164469" description="Flagellar assembly factor FliW">
    <location>
        <begin position="1"/>
        <end position="153"/>
    </location>
</feature>
<name>FLIW_HELMI</name>
<keyword id="KW-1005">Bacterial flagellum biogenesis</keyword>
<keyword id="KW-0143">Chaperone</keyword>
<keyword id="KW-0963">Cytoplasm</keyword>
<keyword id="KW-1185">Reference proteome</keyword>
<keyword id="KW-0810">Translation regulation</keyword>
<gene>
    <name evidence="1" type="primary">fliW</name>
    <name type="ordered locus">Helmi_07410</name>
    <name type="ORF">HM1_1208</name>
</gene>
<evidence type="ECO:0000255" key="1">
    <source>
        <dbReference type="HAMAP-Rule" id="MF_01185"/>
    </source>
</evidence>
<protein>
    <recommendedName>
        <fullName evidence="1">Flagellar assembly factor FliW</fullName>
    </recommendedName>
</protein>